<reference key="1">
    <citation type="submission" date="2006-08" db="EMBL/GenBank/DDBJ databases">
        <title>Complete sequence of Shewanella frigidimarina NCIMB 400.</title>
        <authorList>
            <consortium name="US DOE Joint Genome Institute"/>
            <person name="Copeland A."/>
            <person name="Lucas S."/>
            <person name="Lapidus A."/>
            <person name="Barry K."/>
            <person name="Detter J.C."/>
            <person name="Glavina del Rio T."/>
            <person name="Hammon N."/>
            <person name="Israni S."/>
            <person name="Dalin E."/>
            <person name="Tice H."/>
            <person name="Pitluck S."/>
            <person name="Fredrickson J.K."/>
            <person name="Kolker E."/>
            <person name="McCuel L.A."/>
            <person name="DiChristina T."/>
            <person name="Nealson K.H."/>
            <person name="Newman D."/>
            <person name="Tiedje J.M."/>
            <person name="Zhou J."/>
            <person name="Romine M.F."/>
            <person name="Culley D.E."/>
            <person name="Serres M."/>
            <person name="Chertkov O."/>
            <person name="Brettin T."/>
            <person name="Bruce D."/>
            <person name="Han C."/>
            <person name="Tapia R."/>
            <person name="Gilna P."/>
            <person name="Schmutz J."/>
            <person name="Larimer F."/>
            <person name="Land M."/>
            <person name="Hauser L."/>
            <person name="Kyrpides N."/>
            <person name="Mikhailova N."/>
            <person name="Richardson P."/>
        </authorList>
    </citation>
    <scope>NUCLEOTIDE SEQUENCE [LARGE SCALE GENOMIC DNA]</scope>
    <source>
        <strain>NCIMB 400</strain>
    </source>
</reference>
<comment type="function">
    <text evidence="1">Fluoride-specific ion channel. Important for reducing fluoride concentration in the cell, thus reducing its toxicity.</text>
</comment>
<comment type="catalytic activity">
    <reaction evidence="1">
        <text>fluoride(in) = fluoride(out)</text>
        <dbReference type="Rhea" id="RHEA:76159"/>
        <dbReference type="ChEBI" id="CHEBI:17051"/>
    </reaction>
    <physiologicalReaction direction="left-to-right" evidence="1">
        <dbReference type="Rhea" id="RHEA:76160"/>
    </physiologicalReaction>
</comment>
<comment type="activity regulation">
    <text evidence="1">Na(+) is not transported, but it plays an essential structural role and its presence is essential for fluoride channel function.</text>
</comment>
<comment type="subcellular location">
    <subcellularLocation>
        <location evidence="1">Cell inner membrane</location>
        <topology evidence="1">Multi-pass membrane protein</topology>
    </subcellularLocation>
</comment>
<comment type="similarity">
    <text evidence="1">Belongs to the fluoride channel Fluc/FEX (TC 1.A.43) family.</text>
</comment>
<organism>
    <name type="scientific">Shewanella frigidimarina (strain NCIMB 400)</name>
    <dbReference type="NCBI Taxonomy" id="318167"/>
    <lineage>
        <taxon>Bacteria</taxon>
        <taxon>Pseudomonadati</taxon>
        <taxon>Pseudomonadota</taxon>
        <taxon>Gammaproteobacteria</taxon>
        <taxon>Alteromonadales</taxon>
        <taxon>Shewanellaceae</taxon>
        <taxon>Shewanella</taxon>
    </lineage>
</organism>
<protein>
    <recommendedName>
        <fullName evidence="1">Fluoride-specific ion channel FluC</fullName>
    </recommendedName>
</protein>
<gene>
    <name evidence="1" type="primary">fluC</name>
    <name evidence="1" type="synonym">crcB</name>
    <name type="ordered locus">Sfri_1798</name>
</gene>
<proteinExistence type="inferred from homology"/>
<name>FLUC_SHEFN</name>
<feature type="chain" id="PRO_1000026416" description="Fluoride-specific ion channel FluC">
    <location>
        <begin position="1"/>
        <end position="124"/>
    </location>
</feature>
<feature type="transmembrane region" description="Helical" evidence="1">
    <location>
        <begin position="20"/>
        <end position="40"/>
    </location>
</feature>
<feature type="transmembrane region" description="Helical" evidence="1">
    <location>
        <begin position="60"/>
        <end position="80"/>
    </location>
</feature>
<feature type="transmembrane region" description="Helical" evidence="1">
    <location>
        <begin position="102"/>
        <end position="122"/>
    </location>
</feature>
<feature type="binding site" evidence="1">
    <location>
        <position position="74"/>
    </location>
    <ligand>
        <name>Na(+)</name>
        <dbReference type="ChEBI" id="CHEBI:29101"/>
        <note>structural</note>
    </ligand>
</feature>
<feature type="binding site" evidence="1">
    <location>
        <position position="77"/>
    </location>
    <ligand>
        <name>Na(+)</name>
        <dbReference type="ChEBI" id="CHEBI:29101"/>
        <note>structural</note>
    </ligand>
</feature>
<keyword id="KW-0997">Cell inner membrane</keyword>
<keyword id="KW-1003">Cell membrane</keyword>
<keyword id="KW-0407">Ion channel</keyword>
<keyword id="KW-0406">Ion transport</keyword>
<keyword id="KW-0472">Membrane</keyword>
<keyword id="KW-0479">Metal-binding</keyword>
<keyword id="KW-1185">Reference proteome</keyword>
<keyword id="KW-0915">Sodium</keyword>
<keyword id="KW-0812">Transmembrane</keyword>
<keyword id="KW-1133">Transmembrane helix</keyword>
<keyword id="KW-0813">Transport</keyword>
<sequence length="124" mass="13391">MTNVLLVALGGSIGAVLRYLLSIFMIQVFGSSFPFGTLLVNLLGSFLMGAVYALGQLSHISPEIKALIGIGLLGALTTFSTFSNETLLLLQEGLWHKAILNVLLNVTLCLFMVYLGQQLIFSRV</sequence>
<evidence type="ECO:0000255" key="1">
    <source>
        <dbReference type="HAMAP-Rule" id="MF_00454"/>
    </source>
</evidence>
<dbReference type="EMBL" id="CP000447">
    <property type="protein sequence ID" value="ABI71648.1"/>
    <property type="molecule type" value="Genomic_DNA"/>
</dbReference>
<dbReference type="RefSeq" id="WP_011637264.1">
    <property type="nucleotide sequence ID" value="NC_008345.1"/>
</dbReference>
<dbReference type="SMR" id="Q083B7"/>
<dbReference type="STRING" id="318167.Sfri_1798"/>
<dbReference type="KEGG" id="sfr:Sfri_1798"/>
<dbReference type="eggNOG" id="COG0239">
    <property type="taxonomic scope" value="Bacteria"/>
</dbReference>
<dbReference type="HOGENOM" id="CLU_114342_3_0_6"/>
<dbReference type="OrthoDB" id="9806299at2"/>
<dbReference type="Proteomes" id="UP000000684">
    <property type="component" value="Chromosome"/>
</dbReference>
<dbReference type="GO" id="GO:0005886">
    <property type="term" value="C:plasma membrane"/>
    <property type="evidence" value="ECO:0007669"/>
    <property type="project" value="UniProtKB-SubCell"/>
</dbReference>
<dbReference type="GO" id="GO:0062054">
    <property type="term" value="F:fluoride channel activity"/>
    <property type="evidence" value="ECO:0007669"/>
    <property type="project" value="UniProtKB-UniRule"/>
</dbReference>
<dbReference type="GO" id="GO:0046872">
    <property type="term" value="F:metal ion binding"/>
    <property type="evidence" value="ECO:0007669"/>
    <property type="project" value="UniProtKB-KW"/>
</dbReference>
<dbReference type="GO" id="GO:0140114">
    <property type="term" value="P:cellular detoxification of fluoride"/>
    <property type="evidence" value="ECO:0007669"/>
    <property type="project" value="UniProtKB-UniRule"/>
</dbReference>
<dbReference type="HAMAP" id="MF_00454">
    <property type="entry name" value="FluC"/>
    <property type="match status" value="1"/>
</dbReference>
<dbReference type="InterPro" id="IPR003691">
    <property type="entry name" value="FluC"/>
</dbReference>
<dbReference type="NCBIfam" id="TIGR00494">
    <property type="entry name" value="crcB"/>
    <property type="match status" value="1"/>
</dbReference>
<dbReference type="PANTHER" id="PTHR28259">
    <property type="entry name" value="FLUORIDE EXPORT PROTEIN 1-RELATED"/>
    <property type="match status" value="1"/>
</dbReference>
<dbReference type="PANTHER" id="PTHR28259:SF1">
    <property type="entry name" value="FLUORIDE EXPORT PROTEIN 1-RELATED"/>
    <property type="match status" value="1"/>
</dbReference>
<dbReference type="Pfam" id="PF02537">
    <property type="entry name" value="CRCB"/>
    <property type="match status" value="1"/>
</dbReference>
<accession>Q083B7</accession>